<reference key="1">
    <citation type="journal article" date="2000" name="Nature">
        <title>The genome sequence of the plant pathogen Xylella fastidiosa.</title>
        <authorList>
            <person name="Simpson A.J.G."/>
            <person name="Reinach F.C."/>
            <person name="Arruda P."/>
            <person name="Abreu F.A."/>
            <person name="Acencio M."/>
            <person name="Alvarenga R."/>
            <person name="Alves L.M.C."/>
            <person name="Araya J.E."/>
            <person name="Baia G.S."/>
            <person name="Baptista C.S."/>
            <person name="Barros M.H."/>
            <person name="Bonaccorsi E.D."/>
            <person name="Bordin S."/>
            <person name="Bove J.M."/>
            <person name="Briones M.R.S."/>
            <person name="Bueno M.R.P."/>
            <person name="Camargo A.A."/>
            <person name="Camargo L.E.A."/>
            <person name="Carraro D.M."/>
            <person name="Carrer H."/>
            <person name="Colauto N.B."/>
            <person name="Colombo C."/>
            <person name="Costa F.F."/>
            <person name="Costa M.C.R."/>
            <person name="Costa-Neto C.M."/>
            <person name="Coutinho L.L."/>
            <person name="Cristofani M."/>
            <person name="Dias-Neto E."/>
            <person name="Docena C."/>
            <person name="El-Dorry H."/>
            <person name="Facincani A.P."/>
            <person name="Ferreira A.J.S."/>
            <person name="Ferreira V.C.A."/>
            <person name="Ferro J.A."/>
            <person name="Fraga J.S."/>
            <person name="Franca S.C."/>
            <person name="Franco M.C."/>
            <person name="Frohme M."/>
            <person name="Furlan L.R."/>
            <person name="Garnier M."/>
            <person name="Goldman G.H."/>
            <person name="Goldman M.H.S."/>
            <person name="Gomes S.L."/>
            <person name="Gruber A."/>
            <person name="Ho P.L."/>
            <person name="Hoheisel J.D."/>
            <person name="Junqueira M.L."/>
            <person name="Kemper E.L."/>
            <person name="Kitajima J.P."/>
            <person name="Krieger J.E."/>
            <person name="Kuramae E.E."/>
            <person name="Laigret F."/>
            <person name="Lambais M.R."/>
            <person name="Leite L.C.C."/>
            <person name="Lemos E.G.M."/>
            <person name="Lemos M.V.F."/>
            <person name="Lopes S.A."/>
            <person name="Lopes C.R."/>
            <person name="Machado J.A."/>
            <person name="Machado M.A."/>
            <person name="Madeira A.M.B.N."/>
            <person name="Madeira H.M.F."/>
            <person name="Marino C.L."/>
            <person name="Marques M.V."/>
            <person name="Martins E.A.L."/>
            <person name="Martins E.M.F."/>
            <person name="Matsukuma A.Y."/>
            <person name="Menck C.F.M."/>
            <person name="Miracca E.C."/>
            <person name="Miyaki C.Y."/>
            <person name="Monteiro-Vitorello C.B."/>
            <person name="Moon D.H."/>
            <person name="Nagai M.A."/>
            <person name="Nascimento A.L.T.O."/>
            <person name="Netto L.E.S."/>
            <person name="Nhani A. Jr."/>
            <person name="Nobrega F.G."/>
            <person name="Nunes L.R."/>
            <person name="Oliveira M.A."/>
            <person name="de Oliveira M.C."/>
            <person name="de Oliveira R.C."/>
            <person name="Palmieri D.A."/>
            <person name="Paris A."/>
            <person name="Peixoto B.R."/>
            <person name="Pereira G.A.G."/>
            <person name="Pereira H.A. Jr."/>
            <person name="Pesquero J.B."/>
            <person name="Quaggio R.B."/>
            <person name="Roberto P.G."/>
            <person name="Rodrigues V."/>
            <person name="de Rosa A.J.M."/>
            <person name="de Rosa V.E. Jr."/>
            <person name="de Sa R.G."/>
            <person name="Santelli R.V."/>
            <person name="Sawasaki H.E."/>
            <person name="da Silva A.C.R."/>
            <person name="da Silva A.M."/>
            <person name="da Silva F.R."/>
            <person name="Silva W.A. Jr."/>
            <person name="da Silveira J.F."/>
            <person name="Silvestri M.L.Z."/>
            <person name="Siqueira W.J."/>
            <person name="de Souza A.A."/>
            <person name="de Souza A.P."/>
            <person name="Terenzi M.F."/>
            <person name="Truffi D."/>
            <person name="Tsai S.M."/>
            <person name="Tsuhako M.H."/>
            <person name="Vallada H."/>
            <person name="Van Sluys M.A."/>
            <person name="Verjovski-Almeida S."/>
            <person name="Vettore A.L."/>
            <person name="Zago M.A."/>
            <person name="Zatz M."/>
            <person name="Meidanis J."/>
            <person name="Setubal J.C."/>
        </authorList>
    </citation>
    <scope>NUCLEOTIDE SEQUENCE [LARGE SCALE GENOMIC DNA]</scope>
    <source>
        <strain>9a5c</strain>
    </source>
</reference>
<sequence>MLFELARWLQQFESLFGLFNYLTFRSILAALTALFLSLWIGPVLIQKLSQFKGGQPIRQDGPKMHFSKAGTPTMGGSLILMTVTLSVLLWGDLRNRYVWLVLVVMLAFGAIGWYDDWIKLARRDPNGLKSRWKYLLQSIFGLAAGLFLYFTADVPAAVTFYIPMFKSIALPLTSISFVAITYFWIVGFSNAVNLTDGLDGLAIMPTVLVACALGVFAYASGNTLFSSYLKIPTIPGAGDLIIICAAIAGAGLGFLWFNAYPAMVFMGDIGALALGAVLGTIAVIVRQELVLVVMGGVFVIETLSVIIQVTSFKLTGKRVFRMAPIHHHFELKGWPEPRVIVRFWIISVVLVLVGLATLKVR</sequence>
<accession>Q9PF83</accession>
<organism>
    <name type="scientific">Xylella fastidiosa (strain 9a5c)</name>
    <dbReference type="NCBI Taxonomy" id="160492"/>
    <lineage>
        <taxon>Bacteria</taxon>
        <taxon>Pseudomonadati</taxon>
        <taxon>Pseudomonadota</taxon>
        <taxon>Gammaproteobacteria</taxon>
        <taxon>Lysobacterales</taxon>
        <taxon>Lysobacteraceae</taxon>
        <taxon>Xylella</taxon>
    </lineage>
</organism>
<feature type="chain" id="PRO_0000108932" description="Phospho-N-acetylmuramoyl-pentapeptide-transferase">
    <location>
        <begin position="1"/>
        <end position="361"/>
    </location>
</feature>
<feature type="transmembrane region" description="Helical" evidence="1">
    <location>
        <begin position="26"/>
        <end position="46"/>
    </location>
</feature>
<feature type="transmembrane region" description="Helical" evidence="1">
    <location>
        <begin position="73"/>
        <end position="93"/>
    </location>
</feature>
<feature type="transmembrane region" description="Helical" evidence="1">
    <location>
        <begin position="98"/>
        <end position="118"/>
    </location>
</feature>
<feature type="transmembrane region" description="Helical" evidence="1">
    <location>
        <begin position="139"/>
        <end position="159"/>
    </location>
</feature>
<feature type="transmembrane region" description="Helical" evidence="1">
    <location>
        <begin position="168"/>
        <end position="188"/>
    </location>
</feature>
<feature type="transmembrane region" description="Helical" evidence="1">
    <location>
        <begin position="200"/>
        <end position="220"/>
    </location>
</feature>
<feature type="transmembrane region" description="Helical" evidence="1">
    <location>
        <begin position="237"/>
        <end position="257"/>
    </location>
</feature>
<feature type="transmembrane region" description="Helical" evidence="1">
    <location>
        <begin position="264"/>
        <end position="284"/>
    </location>
</feature>
<feature type="transmembrane region" description="Helical" evidence="1">
    <location>
        <begin position="289"/>
        <end position="309"/>
    </location>
</feature>
<feature type="transmembrane region" description="Helical" evidence="1">
    <location>
        <begin position="339"/>
        <end position="359"/>
    </location>
</feature>
<evidence type="ECO:0000255" key="1">
    <source>
        <dbReference type="HAMAP-Rule" id="MF_00038"/>
    </source>
</evidence>
<keyword id="KW-0131">Cell cycle</keyword>
<keyword id="KW-0132">Cell division</keyword>
<keyword id="KW-0997">Cell inner membrane</keyword>
<keyword id="KW-1003">Cell membrane</keyword>
<keyword id="KW-0133">Cell shape</keyword>
<keyword id="KW-0961">Cell wall biogenesis/degradation</keyword>
<keyword id="KW-0460">Magnesium</keyword>
<keyword id="KW-0472">Membrane</keyword>
<keyword id="KW-0479">Metal-binding</keyword>
<keyword id="KW-0573">Peptidoglycan synthesis</keyword>
<keyword id="KW-0808">Transferase</keyword>
<keyword id="KW-0812">Transmembrane</keyword>
<keyword id="KW-1133">Transmembrane helix</keyword>
<proteinExistence type="inferred from homology"/>
<gene>
    <name evidence="1" type="primary">mraY</name>
    <name type="ordered locus">XF_0795</name>
</gene>
<protein>
    <recommendedName>
        <fullName evidence="1">Phospho-N-acetylmuramoyl-pentapeptide-transferase</fullName>
        <ecNumber evidence="1">2.7.8.13</ecNumber>
    </recommendedName>
    <alternativeName>
        <fullName evidence="1">UDP-MurNAc-pentapeptide phosphotransferase</fullName>
    </alternativeName>
</protein>
<comment type="function">
    <text evidence="1">Catalyzes the initial step of the lipid cycle reactions in the biosynthesis of the cell wall peptidoglycan: transfers peptidoglycan precursor phospho-MurNAc-pentapeptide from UDP-MurNAc-pentapeptide onto the lipid carrier undecaprenyl phosphate, yielding undecaprenyl-pyrophosphoryl-MurNAc-pentapeptide, known as lipid I.</text>
</comment>
<comment type="catalytic activity">
    <reaction evidence="1">
        <text>UDP-N-acetyl-alpha-D-muramoyl-L-alanyl-gamma-D-glutamyl-meso-2,6-diaminopimeloyl-D-alanyl-D-alanine + di-trans,octa-cis-undecaprenyl phosphate = di-trans,octa-cis-undecaprenyl diphospho-N-acetyl-alpha-D-muramoyl-L-alanyl-D-glutamyl-meso-2,6-diaminopimeloyl-D-alanyl-D-alanine + UMP</text>
        <dbReference type="Rhea" id="RHEA:28386"/>
        <dbReference type="ChEBI" id="CHEBI:57865"/>
        <dbReference type="ChEBI" id="CHEBI:60392"/>
        <dbReference type="ChEBI" id="CHEBI:61386"/>
        <dbReference type="ChEBI" id="CHEBI:61387"/>
        <dbReference type="EC" id="2.7.8.13"/>
    </reaction>
</comment>
<comment type="cofactor">
    <cofactor evidence="1">
        <name>Mg(2+)</name>
        <dbReference type="ChEBI" id="CHEBI:18420"/>
    </cofactor>
</comment>
<comment type="pathway">
    <text evidence="1">Cell wall biogenesis; peptidoglycan biosynthesis.</text>
</comment>
<comment type="subcellular location">
    <subcellularLocation>
        <location evidence="1">Cell inner membrane</location>
        <topology evidence="1">Multi-pass membrane protein</topology>
    </subcellularLocation>
</comment>
<comment type="similarity">
    <text evidence="1">Belongs to the glycosyltransferase 4 family. MraY subfamily.</text>
</comment>
<name>MRAY_XYLFA</name>
<dbReference type="EC" id="2.7.8.13" evidence="1"/>
<dbReference type="EMBL" id="AE003849">
    <property type="protein sequence ID" value="AAF83605.1"/>
    <property type="molecule type" value="Genomic_DNA"/>
</dbReference>
<dbReference type="PIR" id="B82763">
    <property type="entry name" value="B82763"/>
</dbReference>
<dbReference type="RefSeq" id="WP_010893316.1">
    <property type="nucleotide sequence ID" value="NC_002488.3"/>
</dbReference>
<dbReference type="SMR" id="Q9PF83"/>
<dbReference type="STRING" id="160492.XF_0795"/>
<dbReference type="KEGG" id="xfa:XF_0795"/>
<dbReference type="eggNOG" id="COG0472">
    <property type="taxonomic scope" value="Bacteria"/>
</dbReference>
<dbReference type="HOGENOM" id="CLU_023982_0_0_6"/>
<dbReference type="UniPathway" id="UPA00219"/>
<dbReference type="Proteomes" id="UP000000812">
    <property type="component" value="Chromosome"/>
</dbReference>
<dbReference type="GO" id="GO:0005886">
    <property type="term" value="C:plasma membrane"/>
    <property type="evidence" value="ECO:0007669"/>
    <property type="project" value="UniProtKB-SubCell"/>
</dbReference>
<dbReference type="GO" id="GO:0046872">
    <property type="term" value="F:metal ion binding"/>
    <property type="evidence" value="ECO:0007669"/>
    <property type="project" value="UniProtKB-KW"/>
</dbReference>
<dbReference type="GO" id="GO:0008963">
    <property type="term" value="F:phospho-N-acetylmuramoyl-pentapeptide-transferase activity"/>
    <property type="evidence" value="ECO:0007669"/>
    <property type="project" value="UniProtKB-UniRule"/>
</dbReference>
<dbReference type="GO" id="GO:0051992">
    <property type="term" value="F:UDP-N-acetylmuramoyl-L-alanyl-D-glutamyl-meso-2,6-diaminopimelyl-D-alanyl-D-alanine:undecaprenyl-phosphate transferase activity"/>
    <property type="evidence" value="ECO:0007669"/>
    <property type="project" value="RHEA"/>
</dbReference>
<dbReference type="GO" id="GO:0051301">
    <property type="term" value="P:cell division"/>
    <property type="evidence" value="ECO:0007669"/>
    <property type="project" value="UniProtKB-KW"/>
</dbReference>
<dbReference type="GO" id="GO:0071555">
    <property type="term" value="P:cell wall organization"/>
    <property type="evidence" value="ECO:0007669"/>
    <property type="project" value="UniProtKB-KW"/>
</dbReference>
<dbReference type="GO" id="GO:0009252">
    <property type="term" value="P:peptidoglycan biosynthetic process"/>
    <property type="evidence" value="ECO:0007669"/>
    <property type="project" value="UniProtKB-UniRule"/>
</dbReference>
<dbReference type="GO" id="GO:0008360">
    <property type="term" value="P:regulation of cell shape"/>
    <property type="evidence" value="ECO:0007669"/>
    <property type="project" value="UniProtKB-KW"/>
</dbReference>
<dbReference type="CDD" id="cd06852">
    <property type="entry name" value="GT_MraY"/>
    <property type="match status" value="1"/>
</dbReference>
<dbReference type="HAMAP" id="MF_00038">
    <property type="entry name" value="MraY"/>
    <property type="match status" value="1"/>
</dbReference>
<dbReference type="InterPro" id="IPR000715">
    <property type="entry name" value="Glycosyl_transferase_4"/>
</dbReference>
<dbReference type="InterPro" id="IPR003524">
    <property type="entry name" value="PNAcMuramoyl-5peptid_Trfase"/>
</dbReference>
<dbReference type="InterPro" id="IPR018480">
    <property type="entry name" value="PNAcMuramoyl-5peptid_Trfase_CS"/>
</dbReference>
<dbReference type="NCBIfam" id="TIGR00445">
    <property type="entry name" value="mraY"/>
    <property type="match status" value="1"/>
</dbReference>
<dbReference type="PANTHER" id="PTHR22926">
    <property type="entry name" value="PHOSPHO-N-ACETYLMURAMOYL-PENTAPEPTIDE-TRANSFERASE"/>
    <property type="match status" value="1"/>
</dbReference>
<dbReference type="PANTHER" id="PTHR22926:SF5">
    <property type="entry name" value="PHOSPHO-N-ACETYLMURAMOYL-PENTAPEPTIDE-TRANSFERASE HOMOLOG"/>
    <property type="match status" value="1"/>
</dbReference>
<dbReference type="Pfam" id="PF00953">
    <property type="entry name" value="Glycos_transf_4"/>
    <property type="match status" value="1"/>
</dbReference>
<dbReference type="PROSITE" id="PS01347">
    <property type="entry name" value="MRAY_1"/>
    <property type="match status" value="1"/>
</dbReference>
<dbReference type="PROSITE" id="PS01348">
    <property type="entry name" value="MRAY_2"/>
    <property type="match status" value="1"/>
</dbReference>